<reference key="1">
    <citation type="journal article" date="2005" name="Nature">
        <title>The genome of the social amoeba Dictyostelium discoideum.</title>
        <authorList>
            <person name="Eichinger L."/>
            <person name="Pachebat J.A."/>
            <person name="Gloeckner G."/>
            <person name="Rajandream M.A."/>
            <person name="Sucgang R."/>
            <person name="Berriman M."/>
            <person name="Song J."/>
            <person name="Olsen R."/>
            <person name="Szafranski K."/>
            <person name="Xu Q."/>
            <person name="Tunggal B."/>
            <person name="Kummerfeld S."/>
            <person name="Madera M."/>
            <person name="Konfortov B.A."/>
            <person name="Rivero F."/>
            <person name="Bankier A.T."/>
            <person name="Lehmann R."/>
            <person name="Hamlin N."/>
            <person name="Davies R."/>
            <person name="Gaudet P."/>
            <person name="Fey P."/>
            <person name="Pilcher K."/>
            <person name="Chen G."/>
            <person name="Saunders D."/>
            <person name="Sodergren E.J."/>
            <person name="Davis P."/>
            <person name="Kerhornou A."/>
            <person name="Nie X."/>
            <person name="Hall N."/>
            <person name="Anjard C."/>
            <person name="Hemphill L."/>
            <person name="Bason N."/>
            <person name="Farbrother P."/>
            <person name="Desany B."/>
            <person name="Just E."/>
            <person name="Morio T."/>
            <person name="Rost R."/>
            <person name="Churcher C.M."/>
            <person name="Cooper J."/>
            <person name="Haydock S."/>
            <person name="van Driessche N."/>
            <person name="Cronin A."/>
            <person name="Goodhead I."/>
            <person name="Muzny D.M."/>
            <person name="Mourier T."/>
            <person name="Pain A."/>
            <person name="Lu M."/>
            <person name="Harper D."/>
            <person name="Lindsay R."/>
            <person name="Hauser H."/>
            <person name="James K.D."/>
            <person name="Quiles M."/>
            <person name="Madan Babu M."/>
            <person name="Saito T."/>
            <person name="Buchrieser C."/>
            <person name="Wardroper A."/>
            <person name="Felder M."/>
            <person name="Thangavelu M."/>
            <person name="Johnson D."/>
            <person name="Knights A."/>
            <person name="Loulseged H."/>
            <person name="Mungall K.L."/>
            <person name="Oliver K."/>
            <person name="Price C."/>
            <person name="Quail M.A."/>
            <person name="Urushihara H."/>
            <person name="Hernandez J."/>
            <person name="Rabbinowitsch E."/>
            <person name="Steffen D."/>
            <person name="Sanders M."/>
            <person name="Ma J."/>
            <person name="Kohara Y."/>
            <person name="Sharp S."/>
            <person name="Simmonds M.N."/>
            <person name="Spiegler S."/>
            <person name="Tivey A."/>
            <person name="Sugano S."/>
            <person name="White B."/>
            <person name="Walker D."/>
            <person name="Woodward J.R."/>
            <person name="Winckler T."/>
            <person name="Tanaka Y."/>
            <person name="Shaulsky G."/>
            <person name="Schleicher M."/>
            <person name="Weinstock G.M."/>
            <person name="Rosenthal A."/>
            <person name="Cox E.C."/>
            <person name="Chisholm R.L."/>
            <person name="Gibbs R.A."/>
            <person name="Loomis W.F."/>
            <person name="Platzer M."/>
            <person name="Kay R.R."/>
            <person name="Williams J.G."/>
            <person name="Dear P.H."/>
            <person name="Noegel A.A."/>
            <person name="Barrell B.G."/>
            <person name="Kuspa A."/>
        </authorList>
    </citation>
    <scope>NUCLEOTIDE SEQUENCE [LARGE SCALE GENOMIC DNA]</scope>
    <source>
        <strain>AX4</strain>
    </source>
</reference>
<reference key="2">
    <citation type="submission" date="2007-07" db="UniProtKB">
        <authorList>
            <person name="Bienvenut W.V."/>
            <person name="Patel H."/>
            <person name="Brunton V.G."/>
            <person name="Frame M.C."/>
        </authorList>
    </citation>
    <scope>PROTEIN SEQUENCE OF 120-130; 252-289 AND 605-613</scope>
    <scope>IDENTIFICATION BY MASS SPECTROMETRY</scope>
</reference>
<reference key="3">
    <citation type="journal article" date="2006" name="J. Proteome Res.">
        <title>Identification of novel centrosomal proteins in Dictyostelium discoideum by comparative proteomic approaches.</title>
        <authorList>
            <person name="Reinders Y."/>
            <person name="Schulz I."/>
            <person name="Graef R."/>
            <person name="Sickmann A."/>
        </authorList>
    </citation>
    <scope>IDENTIFICATION BY MASS SPECTROMETRY [LARGE SCALE ANALYSIS]</scope>
</reference>
<reference key="4">
    <citation type="journal article" date="2006" name="Mol. Cell. Proteomics">
        <title>Proteomics fingerprinting of phagosome maturation and evidence for the role of a Galpha during uptake.</title>
        <authorList>
            <person name="Gotthardt D."/>
            <person name="Blancheteau V."/>
            <person name="Bosserhoff A."/>
            <person name="Ruppert T."/>
            <person name="Delorenzi M."/>
            <person name="Soldati T."/>
        </authorList>
    </citation>
    <scope>IDENTIFICATION BY MASS SPECTROMETRY [LARGE SCALE ANALYSIS]</scope>
    <source>
        <strain>AX2</strain>
    </source>
</reference>
<protein>
    <recommendedName>
        <fullName evidence="2">ATP synthase F(1) complex catalytic subunit beta, mitochondrial</fullName>
        <ecNumber evidence="2">7.1.2.2</ecNumber>
    </recommendedName>
    <alternativeName>
        <fullName evidence="2">ATP synthase F1 subunit beta</fullName>
    </alternativeName>
</protein>
<keyword id="KW-0066">ATP synthesis</keyword>
<keyword id="KW-0067">ATP-binding</keyword>
<keyword id="KW-0139">CF(1)</keyword>
<keyword id="KW-0903">Direct protein sequencing</keyword>
<keyword id="KW-0375">Hydrogen ion transport</keyword>
<keyword id="KW-0406">Ion transport</keyword>
<keyword id="KW-0460">Magnesium</keyword>
<keyword id="KW-0472">Membrane</keyword>
<keyword id="KW-0479">Metal-binding</keyword>
<keyword id="KW-0496">Mitochondrion</keyword>
<keyword id="KW-0999">Mitochondrion inner membrane</keyword>
<keyword id="KW-0547">Nucleotide-binding</keyword>
<keyword id="KW-1185">Reference proteome</keyword>
<keyword id="KW-0809">Transit peptide</keyword>
<keyword id="KW-1278">Translocase</keyword>
<keyword id="KW-0813">Transport</keyword>
<organism>
    <name type="scientific">Dictyostelium discoideum</name>
    <name type="common">Social amoeba</name>
    <dbReference type="NCBI Taxonomy" id="44689"/>
    <lineage>
        <taxon>Eukaryota</taxon>
        <taxon>Amoebozoa</taxon>
        <taxon>Evosea</taxon>
        <taxon>Eumycetozoa</taxon>
        <taxon>Dictyostelia</taxon>
        <taxon>Dictyosteliales</taxon>
        <taxon>Dictyosteliaceae</taxon>
        <taxon>Dictyostelium</taxon>
    </lineage>
</organism>
<gene>
    <name evidence="2" type="primary">atp5f1b</name>
    <name type="synonym">atp5b</name>
    <name type="ORF">DDB_G0269916</name>
</gene>
<dbReference type="EC" id="7.1.2.2" evidence="2"/>
<dbReference type="EMBL" id="AAFI02000005">
    <property type="protein sequence ID" value="EAL72308.1"/>
    <property type="molecule type" value="Genomic_DNA"/>
</dbReference>
<dbReference type="RefSeq" id="XP_646402.1">
    <property type="nucleotide sequence ID" value="XM_641310.1"/>
</dbReference>
<dbReference type="SMR" id="Q55CS9"/>
<dbReference type="FunCoup" id="Q55CS9">
    <property type="interactions" value="339"/>
</dbReference>
<dbReference type="IntAct" id="Q55CS9">
    <property type="interactions" value="1"/>
</dbReference>
<dbReference type="STRING" id="44689.Q55CS9"/>
<dbReference type="PaxDb" id="44689-DDB0233951"/>
<dbReference type="EnsemblProtists" id="EAL72308">
    <property type="protein sequence ID" value="EAL72308"/>
    <property type="gene ID" value="DDB_G0269916"/>
</dbReference>
<dbReference type="GeneID" id="8617357"/>
<dbReference type="KEGG" id="ddi:DDB_G0269916"/>
<dbReference type="dictyBase" id="DDB_G0269916">
    <property type="gene designation" value="atp5b"/>
</dbReference>
<dbReference type="VEuPathDB" id="AmoebaDB:DDB_G0269916"/>
<dbReference type="eggNOG" id="KOG1350">
    <property type="taxonomic scope" value="Eukaryota"/>
</dbReference>
<dbReference type="HOGENOM" id="CLU_022398_0_2_1"/>
<dbReference type="InParanoid" id="Q55CS9"/>
<dbReference type="OMA" id="SMEEGGW"/>
<dbReference type="PhylomeDB" id="Q55CS9"/>
<dbReference type="Reactome" id="R-DDI-1268020">
    <property type="pathway name" value="Mitochondrial protein import"/>
</dbReference>
<dbReference type="Reactome" id="R-DDI-9837999">
    <property type="pathway name" value="Mitochondrial protein degradation"/>
</dbReference>
<dbReference type="PRO" id="PR:Q55CS9"/>
<dbReference type="Proteomes" id="UP000002195">
    <property type="component" value="Chromosome 1"/>
</dbReference>
<dbReference type="GO" id="GO:0005743">
    <property type="term" value="C:mitochondrial inner membrane"/>
    <property type="evidence" value="ECO:0007669"/>
    <property type="project" value="UniProtKB-SubCell"/>
</dbReference>
<dbReference type="GO" id="GO:0005739">
    <property type="term" value="C:mitochondrion"/>
    <property type="evidence" value="ECO:0000250"/>
    <property type="project" value="dictyBase"/>
</dbReference>
<dbReference type="GO" id="GO:0045335">
    <property type="term" value="C:phagocytic vesicle"/>
    <property type="evidence" value="ECO:0007005"/>
    <property type="project" value="dictyBase"/>
</dbReference>
<dbReference type="GO" id="GO:0045259">
    <property type="term" value="C:proton-transporting ATP synthase complex"/>
    <property type="evidence" value="ECO:0000250"/>
    <property type="project" value="UniProtKB"/>
</dbReference>
<dbReference type="GO" id="GO:0005524">
    <property type="term" value="F:ATP binding"/>
    <property type="evidence" value="ECO:0007669"/>
    <property type="project" value="UniProtKB-KW"/>
</dbReference>
<dbReference type="GO" id="GO:0016887">
    <property type="term" value="F:ATP hydrolysis activity"/>
    <property type="evidence" value="ECO:0007669"/>
    <property type="project" value="InterPro"/>
</dbReference>
<dbReference type="GO" id="GO:0046933">
    <property type="term" value="F:proton-transporting ATP synthase activity, rotational mechanism"/>
    <property type="evidence" value="ECO:0000250"/>
    <property type="project" value="dictyBase"/>
</dbReference>
<dbReference type="GO" id="GO:0015986">
    <property type="term" value="P:proton motive force-driven ATP synthesis"/>
    <property type="evidence" value="ECO:0000250"/>
    <property type="project" value="UniProtKB"/>
</dbReference>
<dbReference type="GO" id="GO:0042776">
    <property type="term" value="P:proton motive force-driven mitochondrial ATP synthesis"/>
    <property type="evidence" value="ECO:0000318"/>
    <property type="project" value="GO_Central"/>
</dbReference>
<dbReference type="GO" id="GO:0046689">
    <property type="term" value="P:response to mercury ion"/>
    <property type="evidence" value="ECO:0000314"/>
    <property type="project" value="dictyBase"/>
</dbReference>
<dbReference type="CDD" id="cd18110">
    <property type="entry name" value="ATP-synt_F1_beta_C"/>
    <property type="match status" value="1"/>
</dbReference>
<dbReference type="CDD" id="cd18115">
    <property type="entry name" value="ATP-synt_F1_beta_N"/>
    <property type="match status" value="1"/>
</dbReference>
<dbReference type="CDD" id="cd01133">
    <property type="entry name" value="F1-ATPase_beta_CD"/>
    <property type="match status" value="1"/>
</dbReference>
<dbReference type="FunFam" id="1.10.1140.10:FF:000001">
    <property type="entry name" value="ATP synthase subunit beta"/>
    <property type="match status" value="1"/>
</dbReference>
<dbReference type="FunFam" id="3.40.50.300:FF:000026">
    <property type="entry name" value="ATP synthase subunit beta"/>
    <property type="match status" value="1"/>
</dbReference>
<dbReference type="Gene3D" id="2.40.10.170">
    <property type="match status" value="1"/>
</dbReference>
<dbReference type="Gene3D" id="1.10.1140.10">
    <property type="entry name" value="Bovine Mitochondrial F1-atpase, Atp Synthase Beta Chain, Chain D, domain 3"/>
    <property type="match status" value="1"/>
</dbReference>
<dbReference type="Gene3D" id="3.40.50.300">
    <property type="entry name" value="P-loop containing nucleotide triphosphate hydrolases"/>
    <property type="match status" value="1"/>
</dbReference>
<dbReference type="HAMAP" id="MF_01347">
    <property type="entry name" value="ATP_synth_beta_bact"/>
    <property type="match status" value="1"/>
</dbReference>
<dbReference type="InterPro" id="IPR003593">
    <property type="entry name" value="AAA+_ATPase"/>
</dbReference>
<dbReference type="InterPro" id="IPR055190">
    <property type="entry name" value="ATP-synt_VA_C"/>
</dbReference>
<dbReference type="InterPro" id="IPR005722">
    <property type="entry name" value="ATP_synth_F1_bsu"/>
</dbReference>
<dbReference type="InterPro" id="IPR050053">
    <property type="entry name" value="ATPase_alpha/beta_chains"/>
</dbReference>
<dbReference type="InterPro" id="IPR004100">
    <property type="entry name" value="ATPase_F1/V1/A1_a/bsu_N"/>
</dbReference>
<dbReference type="InterPro" id="IPR036121">
    <property type="entry name" value="ATPase_F1/V1/A1_a/bsu_N_sf"/>
</dbReference>
<dbReference type="InterPro" id="IPR000194">
    <property type="entry name" value="ATPase_F1/V1/A1_a/bsu_nucl-bd"/>
</dbReference>
<dbReference type="InterPro" id="IPR024034">
    <property type="entry name" value="ATPase_F1/V1_b/a_C"/>
</dbReference>
<dbReference type="InterPro" id="IPR027417">
    <property type="entry name" value="P-loop_NTPase"/>
</dbReference>
<dbReference type="NCBIfam" id="TIGR01039">
    <property type="entry name" value="atpD"/>
    <property type="match status" value="1"/>
</dbReference>
<dbReference type="PANTHER" id="PTHR15184">
    <property type="entry name" value="ATP SYNTHASE"/>
    <property type="match status" value="1"/>
</dbReference>
<dbReference type="PANTHER" id="PTHR15184:SF71">
    <property type="entry name" value="ATP SYNTHASE SUBUNIT BETA, MITOCHONDRIAL"/>
    <property type="match status" value="1"/>
</dbReference>
<dbReference type="Pfam" id="PF00006">
    <property type="entry name" value="ATP-synt_ab"/>
    <property type="match status" value="1"/>
</dbReference>
<dbReference type="Pfam" id="PF02874">
    <property type="entry name" value="ATP-synt_ab_N"/>
    <property type="match status" value="1"/>
</dbReference>
<dbReference type="Pfam" id="PF22919">
    <property type="entry name" value="ATP-synt_VA_C"/>
    <property type="match status" value="1"/>
</dbReference>
<dbReference type="SMART" id="SM00382">
    <property type="entry name" value="AAA"/>
    <property type="match status" value="1"/>
</dbReference>
<dbReference type="SUPFAM" id="SSF47917">
    <property type="entry name" value="C-terminal domain of alpha and beta subunits of F1 ATP synthase"/>
    <property type="match status" value="1"/>
</dbReference>
<dbReference type="SUPFAM" id="SSF50615">
    <property type="entry name" value="N-terminal domain of alpha and beta subunits of F1 ATP synthase"/>
    <property type="match status" value="1"/>
</dbReference>
<dbReference type="SUPFAM" id="SSF52540">
    <property type="entry name" value="P-loop containing nucleoside triphosphate hydrolases"/>
    <property type="match status" value="1"/>
</dbReference>
<comment type="function">
    <text evidence="2 3">Catalytic subunit beta, of the mitochondrial membrane ATP synthase complex (F(1)F(0) ATP synthase or Complex V) that produces ATP from ADP in the presence of a proton gradient across the membrane which is generated by electron transport complexes of the respiratory chain. ATP synthase complex consist of a soluble F(1) head domain - the catalytic core - and a membrane F(1) domain - the membrane proton channel. These two domains are linked by a central stalk rotating inside the F(1) region and a stationary peripheral stalk. During catalysis, ATP synthesis in the catalytic domain of F(1) is coupled via a rotary mechanism of the central stalk subunits to proton translocation (By similarity). In vivo, can only synthesize ATP although its ATP hydrolase activity can be activated artificially in vitro (By similarity). With the subunit alpha (ATP5F1A), forms the catalytic core in the F(1) domain (By similarity).</text>
</comment>
<comment type="catalytic activity">
    <reaction evidence="1">
        <text>ATP + H2O + 4 H(+)(in) = ADP + phosphate + 5 H(+)(out)</text>
        <dbReference type="Rhea" id="RHEA:57720"/>
        <dbReference type="ChEBI" id="CHEBI:15377"/>
        <dbReference type="ChEBI" id="CHEBI:15378"/>
        <dbReference type="ChEBI" id="CHEBI:30616"/>
        <dbReference type="ChEBI" id="CHEBI:43474"/>
        <dbReference type="ChEBI" id="CHEBI:456216"/>
        <dbReference type="EC" id="7.1.2.2"/>
    </reaction>
    <physiologicalReaction direction="right-to-left" evidence="1">
        <dbReference type="Rhea" id="RHEA:57722"/>
    </physiologicalReaction>
</comment>
<comment type="subunit">
    <text evidence="2">Homotrimer. Component of the ATP synthase complex composed at least of ATP5F1A/subunit alpha, ATP5F1B/subunit beta, ATP5MC1/subunit c (homooctomer), MT-ATP6/subunit a, MT-ATP8/subunit 8, ATP5ME/subunit e, ATP5MF/subunit f, ATP5MG/subunit g, ATP5MK/subunit k, ATP5MJ/subunit j, ATP5F1C/subunit gamma, ATP5F1D/subunit delta, ATP5F1E/subunit epsilon, ATP5PF/subunit F6, ATP5PB/subunit b, ATP5PD/subunit d, ATP5PO/subunit OSCP. ATP synthase complex consists of a soluble F(1) head domain (subunits alpha(3) and beta(3)) - the catalytic core - and a membrane F(0) domain - the membrane proton channel (subunits c, a, 8, e, f, g, k and j). These two domains are linked by a central stalk (subunits gamma, delta, and epsilon) rotating inside the F1 region and a stationary peripheral stalk (subunits F6, b, d, and OSCP).</text>
</comment>
<comment type="subcellular location">
    <subcellularLocation>
        <location evidence="1">Mitochondrion inner membrane</location>
        <topology evidence="1">Peripheral membrane protein</topology>
        <orientation evidence="1">Matrix side</orientation>
    </subcellularLocation>
</comment>
<comment type="similarity">
    <text evidence="5">Belongs to the ATPase alpha/beta chains family.</text>
</comment>
<evidence type="ECO:0000250" key="1">
    <source>
        <dbReference type="UniProtKB" id="P00829"/>
    </source>
</evidence>
<evidence type="ECO:0000250" key="2">
    <source>
        <dbReference type="UniProtKB" id="P06576"/>
    </source>
</evidence>
<evidence type="ECO:0000250" key="3">
    <source>
        <dbReference type="UniProtKB" id="P19483"/>
    </source>
</evidence>
<evidence type="ECO:0000255" key="4"/>
<evidence type="ECO:0000305" key="5"/>
<sequence length="651" mass="70845">MFVARRLSKNITQISKTAVKTSVRAVPVRGFKTTSVNQAAAPAPKTSQEKEYFEKNKSLLDKESNEESTEVDYSKLNENQGVVHQVIGAVVDVYFPHGKLPYINDALIVDDFQAENVEKVIEDLNNPSLKGKIDFNNVPISNIKLVLEVAQHLGDGIVRCVALDITDGLGRGALVLNTGSPLMVPVGQATLGRIMNVIGEPIDGCGPIPATEKRPIWRAPPPFADLAPSASILETGIKVIDLLAPYSRGGKIGLFGGAGVGKTVLIQELINNIAKAHGGFSVFTGVGERTREGNDLYHEMVEAGVIKKEGPGSKVALVFGQMNEPPGARARVTLTGLTVAEYFRDAEGQDVLLFIDNIFRFTQAGSEMSALLGRIPSAVGYQPTLATDMGCMQERIATTKKGSITSVQAVYVPADDLTDPAPATTFAHLDATTVLSRAISELGIYPCVDPLDSTSLMMDPNIIGVEHYKVATDVQKILQEYKSLQDIIAILGMDDLSEDQKATVFRARKIQRFLSQPFEVAHAFTNMEGRFVKLSDSIKAFKGILEGKYDHLPEAAFYMVGGIEDVEIKAAKLLESAGKEEKKTTTTSTTGQVKEETVREKVTRLVDEAYNAKVKKLKEYGASTAHLEELRAQYEKNFESEISQLEVLLKK</sequence>
<feature type="transit peptide" description="Mitochondrion" evidence="4">
    <location>
        <begin position="1"/>
        <end position="30"/>
    </location>
</feature>
<feature type="chain" id="PRO_0000328545" description="ATP synthase F(1) complex catalytic subunit beta, mitochondrial">
    <location>
        <begin position="31"/>
        <end position="651"/>
    </location>
</feature>
<feature type="binding site" evidence="1">
    <location>
        <position position="259"/>
    </location>
    <ligand>
        <name>ADP</name>
        <dbReference type="ChEBI" id="CHEBI:456216"/>
    </ligand>
</feature>
<feature type="binding site" evidence="1">
    <location>
        <position position="259"/>
    </location>
    <ligand>
        <name>ATP</name>
        <dbReference type="ChEBI" id="CHEBI:30616"/>
    </ligand>
</feature>
<feature type="binding site" evidence="1">
    <location>
        <position position="259"/>
    </location>
    <ligand>
        <name>phosphate</name>
        <dbReference type="ChEBI" id="CHEBI:43474"/>
    </ligand>
</feature>
<feature type="binding site" evidence="1">
    <location>
        <position position="260"/>
    </location>
    <ligand>
        <name>ADP</name>
        <dbReference type="ChEBI" id="CHEBI:456216"/>
    </ligand>
</feature>
<feature type="binding site" evidence="1">
    <location>
        <position position="260"/>
    </location>
    <ligand>
        <name>phosphate</name>
        <dbReference type="ChEBI" id="CHEBI:43474"/>
    </ligand>
</feature>
<feature type="binding site" evidence="1">
    <location>
        <position position="261"/>
    </location>
    <ligand>
        <name>ADP</name>
        <dbReference type="ChEBI" id="CHEBI:456216"/>
    </ligand>
</feature>
<feature type="binding site" evidence="1">
    <location>
        <position position="261"/>
    </location>
    <ligand>
        <name>ATP</name>
        <dbReference type="ChEBI" id="CHEBI:30616"/>
    </ligand>
</feature>
<feature type="binding site" evidence="1">
    <location>
        <position position="261"/>
    </location>
    <ligand>
        <name>phosphate</name>
        <dbReference type="ChEBI" id="CHEBI:43474"/>
    </ligand>
</feature>
<feature type="binding site" evidence="1">
    <location>
        <position position="262"/>
    </location>
    <ligand>
        <name>ADP</name>
        <dbReference type="ChEBI" id="CHEBI:456216"/>
    </ligand>
</feature>
<feature type="binding site" evidence="1">
    <location>
        <position position="262"/>
    </location>
    <ligand>
        <name>ATP</name>
        <dbReference type="ChEBI" id="CHEBI:30616"/>
    </ligand>
</feature>
<feature type="binding site" evidence="1">
    <location>
        <position position="262"/>
    </location>
    <ligand>
        <name>phosphate</name>
        <dbReference type="ChEBI" id="CHEBI:43474"/>
    </ligand>
</feature>
<feature type="binding site" evidence="1">
    <location>
        <position position="263"/>
    </location>
    <ligand>
        <name>ADP</name>
        <dbReference type="ChEBI" id="CHEBI:456216"/>
    </ligand>
</feature>
<feature type="binding site" evidence="1">
    <location>
        <position position="263"/>
    </location>
    <ligand>
        <name>ATP</name>
        <dbReference type="ChEBI" id="CHEBI:30616"/>
    </ligand>
</feature>
<feature type="binding site" evidence="1">
    <location>
        <position position="263"/>
    </location>
    <ligand>
        <name>Mg(2+)</name>
        <dbReference type="ChEBI" id="CHEBI:18420"/>
        <label>1</label>
        <note>ligand shared between two neighboring subunits</note>
    </ligand>
</feature>
<feature type="binding site" evidence="1">
    <location>
        <position position="263"/>
    </location>
    <ligand>
        <name>phosphate</name>
        <dbReference type="ChEBI" id="CHEBI:43474"/>
    </ligand>
</feature>
<feature type="binding site" evidence="1">
    <location>
        <position position="264"/>
    </location>
    <ligand>
        <name>ADP</name>
        <dbReference type="ChEBI" id="CHEBI:456216"/>
    </ligand>
</feature>
<feature type="binding site" evidence="1">
    <location>
        <position position="264"/>
    </location>
    <ligand>
        <name>ATP</name>
        <dbReference type="ChEBI" id="CHEBI:30616"/>
    </ligand>
</feature>
<feature type="binding site" evidence="1">
    <location>
        <position position="288"/>
    </location>
    <ligand>
        <name>Mg(2+)</name>
        <dbReference type="ChEBI" id="CHEBI:18420"/>
        <label>2</label>
        <note>ligand shared between two neighboring subunits</note>
    </ligand>
</feature>
<feature type="binding site" evidence="1">
    <location>
        <position position="289"/>
    </location>
    <ligand>
        <name>ATP</name>
        <dbReference type="ChEBI" id="CHEBI:30616"/>
    </ligand>
</feature>
<proteinExistence type="evidence at protein level"/>
<accession>Q55CS9</accession>
<name>ATPB_DICDI</name>